<sequence>MAEINLFEKYSYEEVKVNNVSLRPYINLSRRGIVPHAATTITKGTTGKARIPIAERFVCSLMRHGRNSGKKRLAINIFEDACFIIHSMTKKNPLQVLVDAIVNSGPREDTARIGRAGSMRRTSVDVSPLKRISIAISNLSAGIRNASFRNRITLAEAIANELIAASTNSQNSYAVNKKKEIERIAQSNR</sequence>
<proteinExistence type="evidence at protein level"/>
<comment type="subunit">
    <text evidence="1">Component of the small ribosomal subunit.</text>
</comment>
<comment type="subcellular location">
    <subcellularLocation>
        <location evidence="1">Cytoplasm</location>
    </subcellularLocation>
</comment>
<comment type="developmental stage">
    <text evidence="2">Expressed in late sporogonial stages.</text>
</comment>
<comment type="similarity">
    <text evidence="3">Belongs to the universal ribosomal protein uS7 family.</text>
</comment>
<gene>
    <name type="primary">RPS5</name>
    <name type="ordered locus">ECU04_0140</name>
</gene>
<dbReference type="EMBL" id="AL590444">
    <property type="protein sequence ID" value="CAD25202.2"/>
    <property type="molecule type" value="Genomic_DNA"/>
</dbReference>
<dbReference type="RefSeq" id="NP_584698.1">
    <property type="nucleotide sequence ID" value="NM_001041048.1"/>
</dbReference>
<dbReference type="PDB" id="7QEP">
    <property type="method" value="EM"/>
    <property type="resolution" value="2.70 A"/>
    <property type="chains" value="S5=1-189"/>
</dbReference>
<dbReference type="PDBsum" id="7QEP"/>
<dbReference type="EMDB" id="EMD-13936"/>
<dbReference type="SMR" id="Q8SS72"/>
<dbReference type="FunCoup" id="Q8SS72">
    <property type="interactions" value="236"/>
</dbReference>
<dbReference type="STRING" id="284813.Q8SS72"/>
<dbReference type="GeneID" id="858846"/>
<dbReference type="KEGG" id="ecu:ECU04_0140"/>
<dbReference type="VEuPathDB" id="MicrosporidiaDB:ECU04_0140"/>
<dbReference type="HOGENOM" id="CLU_063975_0_0_1"/>
<dbReference type="InParanoid" id="Q8SS72"/>
<dbReference type="OrthoDB" id="10264639at2759"/>
<dbReference type="Proteomes" id="UP000000819">
    <property type="component" value="Chromosome IV"/>
</dbReference>
<dbReference type="GO" id="GO:0005737">
    <property type="term" value="C:cytoplasm"/>
    <property type="evidence" value="ECO:0007669"/>
    <property type="project" value="UniProtKB-SubCell"/>
</dbReference>
<dbReference type="GO" id="GO:0015935">
    <property type="term" value="C:small ribosomal subunit"/>
    <property type="evidence" value="ECO:0007669"/>
    <property type="project" value="InterPro"/>
</dbReference>
<dbReference type="GO" id="GO:0003735">
    <property type="term" value="F:structural constituent of ribosome"/>
    <property type="evidence" value="ECO:0007669"/>
    <property type="project" value="InterPro"/>
</dbReference>
<dbReference type="GO" id="GO:0006412">
    <property type="term" value="P:translation"/>
    <property type="evidence" value="ECO:0007669"/>
    <property type="project" value="InterPro"/>
</dbReference>
<dbReference type="CDD" id="cd14867">
    <property type="entry name" value="uS7_Eukaryote"/>
    <property type="match status" value="1"/>
</dbReference>
<dbReference type="Gene3D" id="1.10.455.10">
    <property type="entry name" value="Ribosomal protein S7 domain"/>
    <property type="match status" value="1"/>
</dbReference>
<dbReference type="InterPro" id="IPR000235">
    <property type="entry name" value="Ribosomal_uS7"/>
</dbReference>
<dbReference type="InterPro" id="IPR023798">
    <property type="entry name" value="Ribosomal_uS7_dom"/>
</dbReference>
<dbReference type="InterPro" id="IPR036823">
    <property type="entry name" value="Ribosomal_uS7_dom_sf"/>
</dbReference>
<dbReference type="InterPro" id="IPR005716">
    <property type="entry name" value="Ribosomal_uS7_euk/arc"/>
</dbReference>
<dbReference type="NCBIfam" id="TIGR01028">
    <property type="entry name" value="uS7_euk_arch"/>
    <property type="match status" value="1"/>
</dbReference>
<dbReference type="PANTHER" id="PTHR11205">
    <property type="entry name" value="RIBOSOMAL PROTEIN S7"/>
    <property type="match status" value="1"/>
</dbReference>
<dbReference type="Pfam" id="PF00177">
    <property type="entry name" value="Ribosomal_S7"/>
    <property type="match status" value="1"/>
</dbReference>
<dbReference type="PIRSF" id="PIRSF002122">
    <property type="entry name" value="RPS7p_RPS7a_RPS5e_RPS7o"/>
    <property type="match status" value="1"/>
</dbReference>
<dbReference type="SUPFAM" id="SSF47973">
    <property type="entry name" value="Ribosomal protein S7"/>
    <property type="match status" value="1"/>
</dbReference>
<organism>
    <name type="scientific">Encephalitozoon cuniculi (strain GB-M1)</name>
    <name type="common">Microsporidian parasite</name>
    <dbReference type="NCBI Taxonomy" id="284813"/>
    <lineage>
        <taxon>Eukaryota</taxon>
        <taxon>Fungi</taxon>
        <taxon>Fungi incertae sedis</taxon>
        <taxon>Microsporidia</taxon>
        <taxon>Unikaryonidae</taxon>
        <taxon>Encephalitozoon</taxon>
    </lineage>
</organism>
<name>RS5_ENCCU</name>
<accession>Q8SS72</accession>
<evidence type="ECO:0000250" key="1"/>
<evidence type="ECO:0000269" key="2">
    <source>
    </source>
</evidence>
<evidence type="ECO:0000305" key="3"/>
<protein>
    <recommendedName>
        <fullName evidence="3">Small ribosomal subunit protein uS7</fullName>
    </recommendedName>
    <alternativeName>
        <fullName>40S ribosomal protein S5</fullName>
    </alternativeName>
</protein>
<keyword id="KW-0002">3D-structure</keyword>
<keyword id="KW-0963">Cytoplasm</keyword>
<keyword id="KW-1185">Reference proteome</keyword>
<keyword id="KW-0687">Ribonucleoprotein</keyword>
<keyword id="KW-0689">Ribosomal protein</keyword>
<feature type="chain" id="PRO_0000383136" description="Small ribosomal subunit protein uS7">
    <location>
        <begin position="1"/>
        <end position="189"/>
    </location>
</feature>
<reference key="1">
    <citation type="journal article" date="2001" name="Nature">
        <title>Genome sequence and gene compaction of the eukaryote parasite Encephalitozoon cuniculi.</title>
        <authorList>
            <person name="Katinka M.D."/>
            <person name="Duprat S."/>
            <person name="Cornillot E."/>
            <person name="Metenier G."/>
            <person name="Thomarat F."/>
            <person name="Prensier G."/>
            <person name="Barbe V."/>
            <person name="Peyretaillade E."/>
            <person name="Brottier P."/>
            <person name="Wincker P."/>
            <person name="Delbac F."/>
            <person name="El Alaoui H."/>
            <person name="Peyret P."/>
            <person name="Saurin W."/>
            <person name="Gouy M."/>
            <person name="Weissenbach J."/>
            <person name="Vivares C.P."/>
        </authorList>
    </citation>
    <scope>NUCLEOTIDE SEQUENCE [LARGE SCALE GENOMIC DNA]</scope>
    <source>
        <strain>GB-M1</strain>
    </source>
</reference>
<reference key="2">
    <citation type="journal article" date="2009" name="BMC Genomics">
        <title>Identification of transcriptional signals in Encephalitozoon cuniculi widespread among Microsporidia phylum: support for accurate structural genome annotation.</title>
        <authorList>
            <person name="Peyretaillade E."/>
            <person name="Goncalves O."/>
            <person name="Terrat S."/>
            <person name="Dugat-Bony E."/>
            <person name="Wincker P."/>
            <person name="Cornman R.S."/>
            <person name="Evans J.D."/>
            <person name="Delbac F."/>
            <person name="Peyret P."/>
        </authorList>
    </citation>
    <scope>GENOME REANNOTATION</scope>
    <source>
        <strain>GB-M1</strain>
    </source>
</reference>
<reference key="3">
    <citation type="journal article" date="2006" name="Proteomics">
        <title>Proteomic analysis of the eukaryotic parasite Encephalitozoon cuniculi (microsporidia): a reference map for proteins expressed in late sporogonial stages.</title>
        <authorList>
            <person name="Brosson D."/>
            <person name="Kuhn L."/>
            <person name="Delbac F."/>
            <person name="Garin J."/>
            <person name="Vivares C.P."/>
            <person name="Texier C."/>
        </authorList>
    </citation>
    <scope>IDENTIFICATION BY MASS SPECTROMETRY [LARGE SCALE ANALYSIS]</scope>
    <scope>DEVELOPMENTAL STAGE</scope>
</reference>